<keyword id="KW-0050">Antiport</keyword>
<keyword id="KW-0997">Cell inner membrane</keyword>
<keyword id="KW-1003">Cell membrane</keyword>
<keyword id="KW-0406">Ion transport</keyword>
<keyword id="KW-0472">Membrane</keyword>
<keyword id="KW-0915">Sodium</keyword>
<keyword id="KW-0739">Sodium transport</keyword>
<keyword id="KW-0812">Transmembrane</keyword>
<keyword id="KW-1133">Transmembrane helix</keyword>
<keyword id="KW-0813">Transport</keyword>
<name>MDTK_SALPK</name>
<accession>B5BKE4</accession>
<evidence type="ECO:0000255" key="1">
    <source>
        <dbReference type="HAMAP-Rule" id="MF_00400"/>
    </source>
</evidence>
<dbReference type="EMBL" id="FM200053">
    <property type="protein sequence ID" value="CAR59503.1"/>
    <property type="molecule type" value="Genomic_DNA"/>
</dbReference>
<dbReference type="RefSeq" id="WP_001175075.1">
    <property type="nucleotide sequence ID" value="NC_011147.1"/>
</dbReference>
<dbReference type="SMR" id="B5BKE4"/>
<dbReference type="KEGG" id="sek:SSPA1328"/>
<dbReference type="HOGENOM" id="CLU_012893_6_0_6"/>
<dbReference type="Proteomes" id="UP000001869">
    <property type="component" value="Chromosome"/>
</dbReference>
<dbReference type="GO" id="GO:0005886">
    <property type="term" value="C:plasma membrane"/>
    <property type="evidence" value="ECO:0007669"/>
    <property type="project" value="UniProtKB-SubCell"/>
</dbReference>
<dbReference type="GO" id="GO:0015297">
    <property type="term" value="F:antiporter activity"/>
    <property type="evidence" value="ECO:0007669"/>
    <property type="project" value="UniProtKB-UniRule"/>
</dbReference>
<dbReference type="GO" id="GO:0042910">
    <property type="term" value="F:xenobiotic transmembrane transporter activity"/>
    <property type="evidence" value="ECO:0007669"/>
    <property type="project" value="UniProtKB-UniRule"/>
</dbReference>
<dbReference type="GO" id="GO:0006814">
    <property type="term" value="P:sodium ion transport"/>
    <property type="evidence" value="ECO:0007669"/>
    <property type="project" value="UniProtKB-UniRule"/>
</dbReference>
<dbReference type="GO" id="GO:0006855">
    <property type="term" value="P:xenobiotic transmembrane transport"/>
    <property type="evidence" value="ECO:0007669"/>
    <property type="project" value="UniProtKB-UniRule"/>
</dbReference>
<dbReference type="CDD" id="cd13131">
    <property type="entry name" value="MATE_NorM_like"/>
    <property type="match status" value="1"/>
</dbReference>
<dbReference type="HAMAP" id="MF_00400">
    <property type="entry name" value="MdtK"/>
    <property type="match status" value="1"/>
</dbReference>
<dbReference type="InterPro" id="IPR002528">
    <property type="entry name" value="MATE_fam"/>
</dbReference>
<dbReference type="InterPro" id="IPR050222">
    <property type="entry name" value="MATE_MdtK"/>
</dbReference>
<dbReference type="InterPro" id="IPR048279">
    <property type="entry name" value="MdtK-like"/>
</dbReference>
<dbReference type="InterPro" id="IPR022913">
    <property type="entry name" value="Multidrug-R_MdtK"/>
</dbReference>
<dbReference type="NCBIfam" id="TIGR00797">
    <property type="entry name" value="matE"/>
    <property type="match status" value="1"/>
</dbReference>
<dbReference type="PANTHER" id="PTHR43298:SF2">
    <property type="entry name" value="FMN_FAD EXPORTER YEEO-RELATED"/>
    <property type="match status" value="1"/>
</dbReference>
<dbReference type="PANTHER" id="PTHR43298">
    <property type="entry name" value="MULTIDRUG RESISTANCE PROTEIN NORM-RELATED"/>
    <property type="match status" value="1"/>
</dbReference>
<dbReference type="Pfam" id="PF01554">
    <property type="entry name" value="MatE"/>
    <property type="match status" value="2"/>
</dbReference>
<dbReference type="PIRSF" id="PIRSF006603">
    <property type="entry name" value="DinF"/>
    <property type="match status" value="1"/>
</dbReference>
<organism>
    <name type="scientific">Salmonella paratyphi A (strain AKU_12601)</name>
    <dbReference type="NCBI Taxonomy" id="554290"/>
    <lineage>
        <taxon>Bacteria</taxon>
        <taxon>Pseudomonadati</taxon>
        <taxon>Pseudomonadota</taxon>
        <taxon>Gammaproteobacteria</taxon>
        <taxon>Enterobacterales</taxon>
        <taxon>Enterobacteriaceae</taxon>
        <taxon>Salmonella</taxon>
    </lineage>
</organism>
<gene>
    <name evidence="1" type="primary">mdtK</name>
    <name type="ordered locus">SSPA1328</name>
</gene>
<feature type="chain" id="PRO_1000191106" description="Multidrug resistance protein MdtK">
    <location>
        <begin position="1"/>
        <end position="457"/>
    </location>
</feature>
<feature type="transmembrane region" description="Helical" evidence="1">
    <location>
        <begin position="11"/>
        <end position="31"/>
    </location>
</feature>
<feature type="transmembrane region" description="Helical" evidence="1">
    <location>
        <begin position="53"/>
        <end position="73"/>
    </location>
</feature>
<feature type="transmembrane region" description="Helical" evidence="1">
    <location>
        <begin position="93"/>
        <end position="113"/>
    </location>
</feature>
<feature type="transmembrane region" description="Helical" evidence="1">
    <location>
        <begin position="127"/>
        <end position="147"/>
    </location>
</feature>
<feature type="transmembrane region" description="Helical" evidence="1">
    <location>
        <begin position="160"/>
        <end position="180"/>
    </location>
</feature>
<feature type="transmembrane region" description="Helical" evidence="1">
    <location>
        <begin position="188"/>
        <end position="208"/>
    </location>
</feature>
<feature type="transmembrane region" description="Helical" evidence="1">
    <location>
        <begin position="243"/>
        <end position="263"/>
    </location>
</feature>
<feature type="transmembrane region" description="Helical" evidence="1">
    <location>
        <begin position="276"/>
        <end position="296"/>
    </location>
</feature>
<feature type="transmembrane region" description="Helical" evidence="1">
    <location>
        <begin position="314"/>
        <end position="334"/>
    </location>
</feature>
<feature type="transmembrane region" description="Helical" evidence="1">
    <location>
        <begin position="350"/>
        <end position="370"/>
    </location>
</feature>
<feature type="transmembrane region" description="Helical" evidence="1">
    <location>
        <begin position="387"/>
        <end position="407"/>
    </location>
</feature>
<feature type="transmembrane region" description="Helical" evidence="1">
    <location>
        <begin position="418"/>
        <end position="438"/>
    </location>
</feature>
<reference key="1">
    <citation type="journal article" date="2009" name="BMC Genomics">
        <title>Pseudogene accumulation in the evolutionary histories of Salmonella enterica serovars Paratyphi A and Typhi.</title>
        <authorList>
            <person name="Holt K.E."/>
            <person name="Thomson N.R."/>
            <person name="Wain J."/>
            <person name="Langridge G.C."/>
            <person name="Hasan R."/>
            <person name="Bhutta Z.A."/>
            <person name="Quail M.A."/>
            <person name="Norbertczak H."/>
            <person name="Walker D."/>
            <person name="Simmonds M."/>
            <person name="White B."/>
            <person name="Bason N."/>
            <person name="Mungall K."/>
            <person name="Dougan G."/>
            <person name="Parkhill J."/>
        </authorList>
    </citation>
    <scope>NUCLEOTIDE SEQUENCE [LARGE SCALE GENOMIC DNA]</scope>
    <source>
        <strain>AKU_12601</strain>
    </source>
</reference>
<proteinExistence type="inferred from homology"/>
<sequence>MQKYTSEARQLLALAIPVILAQVAQTAMGFVDTVMAGGYSATDMAAVAIGTSIWLPAILFGHGLLLALTPVIAQLNGSGRRERIAHQVRQGFWLAGFVSVLVMIVLWNAGYIIRSMHNIDPALADKAVGYLRALLWGAPGYLFFQVARNQCEGLAKTKPGMVMGFLGLLVNIPVNYIFIYGHFGMPELGGIGCGVATAAVYWVMFIAMLSYIKHARSMRDIRNEKGFGKPDSVVMKRLIQLGLPIALALFFEVTLFAVVALLVSPLGIVDVAGHQIALNFSSLMFVLPMSLAAAVTIRVGYRLGQGSTLDAQTAARTGLGVGICMAVVTAIFTVTLRKHIALLYNDNPEVVALAAQLMLLAAVYQISDSIQIIGSGILRGYKDTRSIFFITFTAYWVLGLPSGYILALTDLVVDRMGPAGFWMGFIIGLTSAAVLMMLRMRYLQRQPSAIILQRAAR</sequence>
<protein>
    <recommendedName>
        <fullName evidence="1">Multidrug resistance protein MdtK</fullName>
    </recommendedName>
    <alternativeName>
        <fullName evidence="1">Multidrug-efflux transporter</fullName>
    </alternativeName>
</protein>
<comment type="function">
    <text evidence="1">Multidrug efflux pump that functions probably as a Na(+)/drug antiporter.</text>
</comment>
<comment type="subcellular location">
    <subcellularLocation>
        <location evidence="1">Cell inner membrane</location>
        <topology evidence="1">Multi-pass membrane protein</topology>
    </subcellularLocation>
</comment>
<comment type="similarity">
    <text evidence="1">Belongs to the multi antimicrobial extrusion (MATE) (TC 2.A.66.1) family. MdtK subfamily.</text>
</comment>